<accession>A7FU80</accession>
<evidence type="ECO:0000255" key="1">
    <source>
        <dbReference type="HAMAP-Rule" id="MF_01014"/>
    </source>
</evidence>
<feature type="chain" id="PRO_1000063201" description="1-(5-phosphoribosyl)-5-[(5-phosphoribosylamino)methylideneamino] imidazole-4-carboxamide isomerase">
    <location>
        <begin position="1"/>
        <end position="242"/>
    </location>
</feature>
<feature type="active site" description="Proton acceptor" evidence="1">
    <location>
        <position position="8"/>
    </location>
</feature>
<feature type="active site" description="Proton donor" evidence="1">
    <location>
        <position position="129"/>
    </location>
</feature>
<proteinExistence type="inferred from homology"/>
<gene>
    <name evidence="1" type="primary">hisA</name>
    <name type="ordered locus">CLB_1590</name>
</gene>
<keyword id="KW-0028">Amino-acid biosynthesis</keyword>
<keyword id="KW-0963">Cytoplasm</keyword>
<keyword id="KW-0368">Histidine biosynthesis</keyword>
<keyword id="KW-0413">Isomerase</keyword>
<protein>
    <recommendedName>
        <fullName evidence="1">1-(5-phosphoribosyl)-5-[(5-phosphoribosylamino)methylideneamino] imidazole-4-carboxamide isomerase</fullName>
        <ecNumber evidence="1">5.3.1.16</ecNumber>
    </recommendedName>
    <alternativeName>
        <fullName evidence="1">Phosphoribosylformimino-5-aminoimidazole carboxamide ribotide isomerase</fullName>
    </alternativeName>
</protein>
<reference key="1">
    <citation type="journal article" date="2007" name="PLoS ONE">
        <title>Analysis of the neurotoxin complex genes in Clostridium botulinum A1-A4 and B1 strains: BoNT/A3, /Ba4 and /B1 clusters are located within plasmids.</title>
        <authorList>
            <person name="Smith T.J."/>
            <person name="Hill K.K."/>
            <person name="Foley B.T."/>
            <person name="Detter J.C."/>
            <person name="Munk A.C."/>
            <person name="Bruce D.C."/>
            <person name="Doggett N.A."/>
            <person name="Smith L.A."/>
            <person name="Marks J.D."/>
            <person name="Xie G."/>
            <person name="Brettin T.S."/>
        </authorList>
    </citation>
    <scope>NUCLEOTIDE SEQUENCE [LARGE SCALE GENOMIC DNA]</scope>
    <source>
        <strain>ATCC 19397 / Type A</strain>
    </source>
</reference>
<organism>
    <name type="scientific">Clostridium botulinum (strain ATCC 19397 / Type A)</name>
    <dbReference type="NCBI Taxonomy" id="441770"/>
    <lineage>
        <taxon>Bacteria</taxon>
        <taxon>Bacillati</taxon>
        <taxon>Bacillota</taxon>
        <taxon>Clostridia</taxon>
        <taxon>Eubacteriales</taxon>
        <taxon>Clostridiaceae</taxon>
        <taxon>Clostridium</taxon>
    </lineage>
</organism>
<sequence>MIILPAIDLKEGKCIRLYQGDFKASKVVAEDPIEVALKFKENGAEYIHIVDLDGALTGEIKNLSIISSIIKTINIPVELGGGIRNLNTIDMLIGAGIERVILGTAALNNRGLVEEAVKKYDEKIAIGIDAKNEKVAINGWLNVSSINYIDFAKEMEKIGVRNIIFTDISKDGTLKGPNLKQLEKLNESINCNVIASGGIKDIEDLKGIKEMDVYGAIVGKAIYSGNINLNEAIKIINKGSSK</sequence>
<comment type="catalytic activity">
    <reaction evidence="1">
        <text>1-(5-phospho-beta-D-ribosyl)-5-[(5-phospho-beta-D-ribosylamino)methylideneamino]imidazole-4-carboxamide = 5-[(5-phospho-1-deoxy-D-ribulos-1-ylimino)methylamino]-1-(5-phospho-beta-D-ribosyl)imidazole-4-carboxamide</text>
        <dbReference type="Rhea" id="RHEA:15469"/>
        <dbReference type="ChEBI" id="CHEBI:58435"/>
        <dbReference type="ChEBI" id="CHEBI:58525"/>
        <dbReference type="EC" id="5.3.1.16"/>
    </reaction>
</comment>
<comment type="pathway">
    <text evidence="1">Amino-acid biosynthesis; L-histidine biosynthesis; L-histidine from 5-phospho-alpha-D-ribose 1-diphosphate: step 4/9.</text>
</comment>
<comment type="subcellular location">
    <subcellularLocation>
        <location evidence="1">Cytoplasm</location>
    </subcellularLocation>
</comment>
<comment type="similarity">
    <text evidence="1">Belongs to the HisA/HisF family.</text>
</comment>
<dbReference type="EC" id="5.3.1.16" evidence="1"/>
<dbReference type="EMBL" id="CP000726">
    <property type="protein sequence ID" value="ABS33390.1"/>
    <property type="molecule type" value="Genomic_DNA"/>
</dbReference>
<dbReference type="RefSeq" id="WP_011949114.1">
    <property type="nucleotide sequence ID" value="NC_009697.1"/>
</dbReference>
<dbReference type="SMR" id="A7FU80"/>
<dbReference type="GeneID" id="5185825"/>
<dbReference type="KEGG" id="cba:CLB_1590"/>
<dbReference type="HOGENOM" id="CLU_048577_1_1_9"/>
<dbReference type="UniPathway" id="UPA00031">
    <property type="reaction ID" value="UER00009"/>
</dbReference>
<dbReference type="GO" id="GO:0005737">
    <property type="term" value="C:cytoplasm"/>
    <property type="evidence" value="ECO:0007669"/>
    <property type="project" value="UniProtKB-SubCell"/>
</dbReference>
<dbReference type="GO" id="GO:0003949">
    <property type="term" value="F:1-(5-phosphoribosyl)-5-[(5-phosphoribosylamino)methylideneamino]imidazole-4-carboxamide isomerase activity"/>
    <property type="evidence" value="ECO:0007669"/>
    <property type="project" value="UniProtKB-UniRule"/>
</dbReference>
<dbReference type="GO" id="GO:0000105">
    <property type="term" value="P:L-histidine biosynthetic process"/>
    <property type="evidence" value="ECO:0007669"/>
    <property type="project" value="UniProtKB-UniRule"/>
</dbReference>
<dbReference type="GO" id="GO:0000162">
    <property type="term" value="P:L-tryptophan biosynthetic process"/>
    <property type="evidence" value="ECO:0007669"/>
    <property type="project" value="TreeGrafter"/>
</dbReference>
<dbReference type="CDD" id="cd04732">
    <property type="entry name" value="HisA"/>
    <property type="match status" value="1"/>
</dbReference>
<dbReference type="FunFam" id="3.20.20.70:FF:000009">
    <property type="entry name" value="1-(5-phosphoribosyl)-5-[(5-phosphoribosylamino)methylideneamino] imidazole-4-carboxamide isomerase"/>
    <property type="match status" value="1"/>
</dbReference>
<dbReference type="Gene3D" id="3.20.20.70">
    <property type="entry name" value="Aldolase class I"/>
    <property type="match status" value="1"/>
</dbReference>
<dbReference type="HAMAP" id="MF_01014">
    <property type="entry name" value="HisA"/>
    <property type="match status" value="1"/>
</dbReference>
<dbReference type="InterPro" id="IPR013785">
    <property type="entry name" value="Aldolase_TIM"/>
</dbReference>
<dbReference type="InterPro" id="IPR006062">
    <property type="entry name" value="His_biosynth"/>
</dbReference>
<dbReference type="InterPro" id="IPR006063">
    <property type="entry name" value="HisA_bact_arch"/>
</dbReference>
<dbReference type="InterPro" id="IPR044524">
    <property type="entry name" value="Isoase_HisA-like"/>
</dbReference>
<dbReference type="InterPro" id="IPR023016">
    <property type="entry name" value="Isoase_HisA-like_bact"/>
</dbReference>
<dbReference type="InterPro" id="IPR011060">
    <property type="entry name" value="RibuloseP-bd_barrel"/>
</dbReference>
<dbReference type="NCBIfam" id="TIGR00007">
    <property type="entry name" value="1-(5-phosphoribosyl)-5-[(5-phosphoribosylamino)methylideneamino]imidazole-4-carboxamide isomerase"/>
    <property type="match status" value="1"/>
</dbReference>
<dbReference type="PANTHER" id="PTHR43090">
    <property type="entry name" value="1-(5-PHOSPHORIBOSYL)-5-[(5-PHOSPHORIBOSYLAMINO)METHYLIDENEAMINO] IMIDAZOLE-4-CARBOXAMIDE ISOMERASE"/>
    <property type="match status" value="1"/>
</dbReference>
<dbReference type="PANTHER" id="PTHR43090:SF2">
    <property type="entry name" value="1-(5-PHOSPHORIBOSYL)-5-[(5-PHOSPHORIBOSYLAMINO)METHYLIDENEAMINO] IMIDAZOLE-4-CARBOXAMIDE ISOMERASE"/>
    <property type="match status" value="1"/>
</dbReference>
<dbReference type="Pfam" id="PF00977">
    <property type="entry name" value="His_biosynth"/>
    <property type="match status" value="1"/>
</dbReference>
<dbReference type="SUPFAM" id="SSF51366">
    <property type="entry name" value="Ribulose-phoshate binding barrel"/>
    <property type="match status" value="1"/>
</dbReference>
<name>HIS4_CLOB1</name>